<feature type="chain" id="PRO_0000248710" description="Proline--tRNA ligase">
    <location>
        <begin position="1"/>
        <end position="616"/>
    </location>
</feature>
<organism>
    <name type="scientific">Lactococcus lactis subsp. lactis (strain IL1403)</name>
    <name type="common">Streptococcus lactis</name>
    <dbReference type="NCBI Taxonomy" id="272623"/>
    <lineage>
        <taxon>Bacteria</taxon>
        <taxon>Bacillati</taxon>
        <taxon>Bacillota</taxon>
        <taxon>Bacilli</taxon>
        <taxon>Lactobacillales</taxon>
        <taxon>Streptococcaceae</taxon>
        <taxon>Lactococcus</taxon>
    </lineage>
</organism>
<sequence length="616" mass="69251">MKQSKMLIPTLREMPSDAQVISHALLMRAGYVRQVSAGIYAYLPLANRVLEKLKNIMREEFDEIGAVELLAPSLLTADLWRESGRYDTYGEDLYKLKNRDNSDFILGPTHEETMTSLVRDEITSYKKLPLNVYQIAPKFRDEKRPRYGLLRGREFLMKDGYSYHADQDSLDETYNDYKKAYEKIFERAGLNFKPIIADAGAMGGKDSQEFIAITDDRINLEKWLVLSKNITSIEEIPESVLSEIKEELGKWLIAGEDTIVYAEGGDYAANIEMASSQFEPNVAYTEELELEKVATPGAKTIDEVSKFLEIDEEQTVKTLVYHADDELVVVLLNGNDQLNEVKLTNYLGASFIEAASEAEVEEKFGAHFGSLGPIGLENVKIIADRKVEQIKNAVVGANVDGFHYKNANFGRDYEVEEFVDLRTVNEGEISPDGRGTLKFARGIEIGHIFKLGTRYTEAMNANILDANGRSIPMLMGCYGIGVSRLLSAILEQFARIYVEKTPREEFKFSWSINFPKELAPFDIHLVPVNVKDEAAMELTSELEEKLRGKGYQVLVDDRNERAGVKFADSDLIGLPVRVTIGKKAAEGVVEVKIRATGEVVEINKDELVNTIEILSK</sequence>
<reference key="1">
    <citation type="journal article" date="2001" name="Genome Res.">
        <title>The complete genome sequence of the lactic acid bacterium Lactococcus lactis ssp. lactis IL1403.</title>
        <authorList>
            <person name="Bolotin A."/>
            <person name="Wincker P."/>
            <person name="Mauger S."/>
            <person name="Jaillon O."/>
            <person name="Malarme K."/>
            <person name="Weissenbach J."/>
            <person name="Ehrlich S.D."/>
            <person name="Sorokin A."/>
        </authorList>
    </citation>
    <scope>NUCLEOTIDE SEQUENCE [LARGE SCALE GENOMIC DNA]</scope>
    <source>
        <strain>IL1403</strain>
    </source>
</reference>
<keyword id="KW-0030">Aminoacyl-tRNA synthetase</keyword>
<keyword id="KW-0067">ATP-binding</keyword>
<keyword id="KW-0963">Cytoplasm</keyword>
<keyword id="KW-0436">Ligase</keyword>
<keyword id="KW-0547">Nucleotide-binding</keyword>
<keyword id="KW-0648">Protein biosynthesis</keyword>
<keyword id="KW-1185">Reference proteome</keyword>
<gene>
    <name evidence="1" type="primary">proS</name>
    <name type="ordered locus">LL2127</name>
    <name type="ORF">L0356</name>
</gene>
<dbReference type="EC" id="6.1.1.15" evidence="1"/>
<dbReference type="EMBL" id="AE005176">
    <property type="protein sequence ID" value="AAK06225.1"/>
    <property type="molecule type" value="Genomic_DNA"/>
</dbReference>
<dbReference type="PIR" id="G86890">
    <property type="entry name" value="G86890"/>
</dbReference>
<dbReference type="RefSeq" id="NP_268284.1">
    <property type="nucleotide sequence ID" value="NC_002662.1"/>
</dbReference>
<dbReference type="RefSeq" id="WP_010906324.1">
    <property type="nucleotide sequence ID" value="NC_002662.1"/>
</dbReference>
<dbReference type="SMR" id="Q9CDT4"/>
<dbReference type="PaxDb" id="272623-L0356"/>
<dbReference type="EnsemblBacteria" id="AAK06225">
    <property type="protein sequence ID" value="AAK06225"/>
    <property type="gene ID" value="L0356"/>
</dbReference>
<dbReference type="KEGG" id="lla:L0356"/>
<dbReference type="PATRIC" id="fig|272623.7.peg.2286"/>
<dbReference type="eggNOG" id="COG0442">
    <property type="taxonomic scope" value="Bacteria"/>
</dbReference>
<dbReference type="HOGENOM" id="CLU_016739_0_0_9"/>
<dbReference type="OrthoDB" id="9809052at2"/>
<dbReference type="Proteomes" id="UP000002196">
    <property type="component" value="Chromosome"/>
</dbReference>
<dbReference type="GO" id="GO:0005829">
    <property type="term" value="C:cytosol"/>
    <property type="evidence" value="ECO:0007669"/>
    <property type="project" value="TreeGrafter"/>
</dbReference>
<dbReference type="GO" id="GO:0002161">
    <property type="term" value="F:aminoacyl-tRNA deacylase activity"/>
    <property type="evidence" value="ECO:0007669"/>
    <property type="project" value="InterPro"/>
</dbReference>
<dbReference type="GO" id="GO:0005524">
    <property type="term" value="F:ATP binding"/>
    <property type="evidence" value="ECO:0007669"/>
    <property type="project" value="UniProtKB-UniRule"/>
</dbReference>
<dbReference type="GO" id="GO:0140096">
    <property type="term" value="F:catalytic activity, acting on a protein"/>
    <property type="evidence" value="ECO:0007669"/>
    <property type="project" value="UniProtKB-ARBA"/>
</dbReference>
<dbReference type="GO" id="GO:0004827">
    <property type="term" value="F:proline-tRNA ligase activity"/>
    <property type="evidence" value="ECO:0007669"/>
    <property type="project" value="UniProtKB-UniRule"/>
</dbReference>
<dbReference type="GO" id="GO:0016740">
    <property type="term" value="F:transferase activity"/>
    <property type="evidence" value="ECO:0007669"/>
    <property type="project" value="UniProtKB-ARBA"/>
</dbReference>
<dbReference type="GO" id="GO:0006433">
    <property type="term" value="P:prolyl-tRNA aminoacylation"/>
    <property type="evidence" value="ECO:0007669"/>
    <property type="project" value="UniProtKB-UniRule"/>
</dbReference>
<dbReference type="CDD" id="cd04334">
    <property type="entry name" value="ProRS-INS"/>
    <property type="match status" value="1"/>
</dbReference>
<dbReference type="CDD" id="cd00861">
    <property type="entry name" value="ProRS_anticodon_short"/>
    <property type="match status" value="1"/>
</dbReference>
<dbReference type="CDD" id="cd00779">
    <property type="entry name" value="ProRS_core_prok"/>
    <property type="match status" value="1"/>
</dbReference>
<dbReference type="FunFam" id="3.40.50.800:FF:000011">
    <property type="entry name" value="Proline--tRNA ligase"/>
    <property type="match status" value="1"/>
</dbReference>
<dbReference type="Gene3D" id="3.40.50.800">
    <property type="entry name" value="Anticodon-binding domain"/>
    <property type="match status" value="1"/>
</dbReference>
<dbReference type="Gene3D" id="3.30.930.10">
    <property type="entry name" value="Bira Bifunctional Protein, Domain 2"/>
    <property type="match status" value="1"/>
</dbReference>
<dbReference type="Gene3D" id="3.90.960.10">
    <property type="entry name" value="YbaK/aminoacyl-tRNA synthetase-associated domain"/>
    <property type="match status" value="1"/>
</dbReference>
<dbReference type="HAMAP" id="MF_01569">
    <property type="entry name" value="Pro_tRNA_synth_type1"/>
    <property type="match status" value="1"/>
</dbReference>
<dbReference type="InterPro" id="IPR002314">
    <property type="entry name" value="aa-tRNA-synt_IIb"/>
</dbReference>
<dbReference type="InterPro" id="IPR006195">
    <property type="entry name" value="aa-tRNA-synth_II"/>
</dbReference>
<dbReference type="InterPro" id="IPR045864">
    <property type="entry name" value="aa-tRNA-synth_II/BPL/LPL"/>
</dbReference>
<dbReference type="InterPro" id="IPR004154">
    <property type="entry name" value="Anticodon-bd"/>
</dbReference>
<dbReference type="InterPro" id="IPR036621">
    <property type="entry name" value="Anticodon-bd_dom_sf"/>
</dbReference>
<dbReference type="InterPro" id="IPR002316">
    <property type="entry name" value="Pro-tRNA-ligase_IIa"/>
</dbReference>
<dbReference type="InterPro" id="IPR004500">
    <property type="entry name" value="Pro-tRNA-synth_IIa_bac-type"/>
</dbReference>
<dbReference type="InterPro" id="IPR023717">
    <property type="entry name" value="Pro-tRNA-Synthase_IIa_type1"/>
</dbReference>
<dbReference type="InterPro" id="IPR050062">
    <property type="entry name" value="Pro-tRNA_synthetase"/>
</dbReference>
<dbReference type="InterPro" id="IPR044140">
    <property type="entry name" value="ProRS_anticodon_short"/>
</dbReference>
<dbReference type="InterPro" id="IPR033730">
    <property type="entry name" value="ProRS_core_prok"/>
</dbReference>
<dbReference type="InterPro" id="IPR036754">
    <property type="entry name" value="YbaK/aa-tRNA-synt-asso_dom_sf"/>
</dbReference>
<dbReference type="InterPro" id="IPR007214">
    <property type="entry name" value="YbaK/aa-tRNA-synth-assoc-dom"/>
</dbReference>
<dbReference type="NCBIfam" id="NF006625">
    <property type="entry name" value="PRK09194.1"/>
    <property type="match status" value="1"/>
</dbReference>
<dbReference type="NCBIfam" id="TIGR00409">
    <property type="entry name" value="proS_fam_II"/>
    <property type="match status" value="2"/>
</dbReference>
<dbReference type="PANTHER" id="PTHR42753">
    <property type="entry name" value="MITOCHONDRIAL RIBOSOME PROTEIN L39/PROLYL-TRNA LIGASE FAMILY MEMBER"/>
    <property type="match status" value="1"/>
</dbReference>
<dbReference type="PANTHER" id="PTHR42753:SF2">
    <property type="entry name" value="PROLINE--TRNA LIGASE"/>
    <property type="match status" value="1"/>
</dbReference>
<dbReference type="Pfam" id="PF03129">
    <property type="entry name" value="HGTP_anticodon"/>
    <property type="match status" value="1"/>
</dbReference>
<dbReference type="Pfam" id="PF00587">
    <property type="entry name" value="tRNA-synt_2b"/>
    <property type="match status" value="1"/>
</dbReference>
<dbReference type="Pfam" id="PF04073">
    <property type="entry name" value="tRNA_edit"/>
    <property type="match status" value="1"/>
</dbReference>
<dbReference type="PRINTS" id="PR01046">
    <property type="entry name" value="TRNASYNTHPRO"/>
</dbReference>
<dbReference type="SUPFAM" id="SSF52954">
    <property type="entry name" value="Class II aaRS ABD-related"/>
    <property type="match status" value="1"/>
</dbReference>
<dbReference type="SUPFAM" id="SSF55681">
    <property type="entry name" value="Class II aaRS and biotin synthetases"/>
    <property type="match status" value="1"/>
</dbReference>
<dbReference type="SUPFAM" id="SSF55826">
    <property type="entry name" value="YbaK/ProRS associated domain"/>
    <property type="match status" value="1"/>
</dbReference>
<dbReference type="PROSITE" id="PS50862">
    <property type="entry name" value="AA_TRNA_LIGASE_II"/>
    <property type="match status" value="1"/>
</dbReference>
<comment type="function">
    <text evidence="1">Catalyzes the attachment of proline to tRNA(Pro) in a two-step reaction: proline is first activated by ATP to form Pro-AMP and then transferred to the acceptor end of tRNA(Pro). As ProRS can inadvertently accommodate and process non-cognate amino acids such as alanine and cysteine, to avoid such errors it has two additional distinct editing activities against alanine. One activity is designated as 'pretransfer' editing and involves the tRNA(Pro)-independent hydrolysis of activated Ala-AMP. The other activity is designated 'posttransfer' editing and involves deacylation of mischarged Ala-tRNA(Pro). The misacylated Cys-tRNA(Pro) is not edited by ProRS.</text>
</comment>
<comment type="catalytic activity">
    <reaction evidence="1">
        <text>tRNA(Pro) + L-proline + ATP = L-prolyl-tRNA(Pro) + AMP + diphosphate</text>
        <dbReference type="Rhea" id="RHEA:14305"/>
        <dbReference type="Rhea" id="RHEA-COMP:9700"/>
        <dbReference type="Rhea" id="RHEA-COMP:9702"/>
        <dbReference type="ChEBI" id="CHEBI:30616"/>
        <dbReference type="ChEBI" id="CHEBI:33019"/>
        <dbReference type="ChEBI" id="CHEBI:60039"/>
        <dbReference type="ChEBI" id="CHEBI:78442"/>
        <dbReference type="ChEBI" id="CHEBI:78532"/>
        <dbReference type="ChEBI" id="CHEBI:456215"/>
        <dbReference type="EC" id="6.1.1.15"/>
    </reaction>
</comment>
<comment type="subunit">
    <text evidence="1">Homodimer.</text>
</comment>
<comment type="subcellular location">
    <subcellularLocation>
        <location evidence="1">Cytoplasm</location>
    </subcellularLocation>
</comment>
<comment type="domain">
    <text evidence="1">Consists of three domains: the N-terminal catalytic domain, the editing domain and the C-terminal anticodon-binding domain.</text>
</comment>
<comment type="similarity">
    <text evidence="1">Belongs to the class-II aminoacyl-tRNA synthetase family. ProS type 1 subfamily.</text>
</comment>
<proteinExistence type="inferred from homology"/>
<protein>
    <recommendedName>
        <fullName evidence="1">Proline--tRNA ligase</fullName>
        <ecNumber evidence="1">6.1.1.15</ecNumber>
    </recommendedName>
    <alternativeName>
        <fullName evidence="1">Prolyl-tRNA synthetase</fullName>
        <shortName evidence="1">ProRS</shortName>
    </alternativeName>
</protein>
<evidence type="ECO:0000255" key="1">
    <source>
        <dbReference type="HAMAP-Rule" id="MF_01569"/>
    </source>
</evidence>
<accession>Q9CDT4</accession>
<name>SYP_LACLA</name>